<accession>P25561</accession>
<reference key="1">
    <citation type="journal article" date="1992" name="Nature">
        <title>The complete DNA sequence of yeast chromosome III.</title>
        <authorList>
            <person name="Oliver S.G."/>
            <person name="van der Aart Q.J.M."/>
            <person name="Agostoni-Carbone M.L."/>
            <person name="Aigle M."/>
            <person name="Alberghina L."/>
            <person name="Alexandraki D."/>
            <person name="Antoine G."/>
            <person name="Anwar R."/>
            <person name="Ballesta J.P.G."/>
            <person name="Benit P."/>
            <person name="Berben G."/>
            <person name="Bergantino E."/>
            <person name="Biteau N."/>
            <person name="Bolle P.-A."/>
            <person name="Bolotin-Fukuhara M."/>
            <person name="Brown A."/>
            <person name="Brown A.J.P."/>
            <person name="Buhler J.-M."/>
            <person name="Carcano C."/>
            <person name="Carignani G."/>
            <person name="Cederberg H."/>
            <person name="Chanet R."/>
            <person name="Contreras R."/>
            <person name="Crouzet M."/>
            <person name="Daignan-Fornier B."/>
            <person name="Defoor E."/>
            <person name="Delgado M.D."/>
            <person name="Demolder J."/>
            <person name="Doira C."/>
            <person name="Dubois E."/>
            <person name="Dujon B."/>
            <person name="Duesterhoeft A."/>
            <person name="Erdmann D."/>
            <person name="Esteban M."/>
            <person name="Fabre F."/>
            <person name="Fairhead C."/>
            <person name="Faye G."/>
            <person name="Feldmann H."/>
            <person name="Fiers W."/>
            <person name="Francingues-Gaillard M.-C."/>
            <person name="Franco L."/>
            <person name="Frontali L."/>
            <person name="Fukuhara H."/>
            <person name="Fuller L.J."/>
            <person name="Galland P."/>
            <person name="Gent M.E."/>
            <person name="Gigot D."/>
            <person name="Gilliquet V."/>
            <person name="Glansdorff N."/>
            <person name="Goffeau A."/>
            <person name="Grenson M."/>
            <person name="Grisanti P."/>
            <person name="Grivell L.A."/>
            <person name="de Haan M."/>
            <person name="Haasemann M."/>
            <person name="Hatat D."/>
            <person name="Hoenicka J."/>
            <person name="Hegemann J.H."/>
            <person name="Herbert C.J."/>
            <person name="Hilger F."/>
            <person name="Hohmann S."/>
            <person name="Hollenberg C.P."/>
            <person name="Huse K."/>
            <person name="Iborra F."/>
            <person name="Indge K.J."/>
            <person name="Isono K."/>
            <person name="Jacq C."/>
            <person name="Jacquet M."/>
            <person name="James C.M."/>
            <person name="Jauniaux J.-C."/>
            <person name="Jia Y."/>
            <person name="Jimenez A."/>
            <person name="Kelly A."/>
            <person name="Kleinhans U."/>
            <person name="Kreisl P."/>
            <person name="Lanfranchi G."/>
            <person name="Lewis C."/>
            <person name="van der Linden C.G."/>
            <person name="Lucchini G."/>
            <person name="Lutzenkirchen K."/>
            <person name="Maat M.J."/>
            <person name="Mallet L."/>
            <person name="Mannhaupt G."/>
            <person name="Martegani E."/>
            <person name="Mathieu A."/>
            <person name="Maurer C.T.C."/>
            <person name="McConnell D."/>
            <person name="McKee R.A."/>
            <person name="Messenguy F."/>
            <person name="Mewes H.-W."/>
            <person name="Molemans F."/>
            <person name="Montague M.A."/>
            <person name="Muzi Falconi M."/>
            <person name="Navas L."/>
            <person name="Newlon C.S."/>
            <person name="Noone D."/>
            <person name="Pallier C."/>
            <person name="Panzeri L."/>
            <person name="Pearson B.M."/>
            <person name="Perea J."/>
            <person name="Philippsen P."/>
            <person name="Pierard A."/>
            <person name="Planta R.J."/>
            <person name="Plevani P."/>
            <person name="Poetsch B."/>
            <person name="Pohl F.M."/>
            <person name="Purnelle B."/>
            <person name="Ramezani Rad M."/>
            <person name="Rasmussen S.W."/>
            <person name="Raynal A."/>
            <person name="Remacha M.A."/>
            <person name="Richterich P."/>
            <person name="Roberts A.B."/>
            <person name="Rodriguez F."/>
            <person name="Sanz E."/>
            <person name="Schaaff-Gerstenschlaeger I."/>
            <person name="Scherens B."/>
            <person name="Schweitzer B."/>
            <person name="Shu Y."/>
            <person name="Skala J."/>
            <person name="Slonimski P.P."/>
            <person name="Sor F."/>
            <person name="Soustelle C."/>
            <person name="Spiegelberg R."/>
            <person name="Stateva L.I."/>
            <person name="Steensma H.Y."/>
            <person name="Steiner S."/>
            <person name="Thierry A."/>
            <person name="Thireos G."/>
            <person name="Tzermia M."/>
            <person name="Urrestarazu L.A."/>
            <person name="Valle G."/>
            <person name="Vetter I."/>
            <person name="van Vliet-Reedijk J.C."/>
            <person name="Voet M."/>
            <person name="Volckaert G."/>
            <person name="Vreken P."/>
            <person name="Wang H."/>
            <person name="Warmington J.R."/>
            <person name="von Wettstein D."/>
            <person name="Wicksteed B.L."/>
            <person name="Wilson C."/>
            <person name="Wurst H."/>
            <person name="Xu G."/>
            <person name="Yoshikawa A."/>
            <person name="Zimmermann F.K."/>
            <person name="Sgouros J.G."/>
        </authorList>
    </citation>
    <scope>NUCLEOTIDE SEQUENCE [LARGE SCALE GENOMIC DNA]</scope>
    <source>
        <strain>ATCC 204508 / S288c</strain>
    </source>
</reference>
<reference key="2">
    <citation type="journal article" date="2014" name="G3 (Bethesda)">
        <title>The reference genome sequence of Saccharomyces cerevisiae: Then and now.</title>
        <authorList>
            <person name="Engel S.R."/>
            <person name="Dietrich F.S."/>
            <person name="Fisk D.G."/>
            <person name="Binkley G."/>
            <person name="Balakrishnan R."/>
            <person name="Costanzo M.C."/>
            <person name="Dwight S.S."/>
            <person name="Hitz B.C."/>
            <person name="Karra K."/>
            <person name="Nash R.S."/>
            <person name="Weng S."/>
            <person name="Wong E.D."/>
            <person name="Lloyd P."/>
            <person name="Skrzypek M.S."/>
            <person name="Miyasato S.R."/>
            <person name="Simison M."/>
            <person name="Cherry J.M."/>
        </authorList>
    </citation>
    <scope>GENOME REANNOTATION</scope>
    <source>
        <strain>ATCC 204508 / S288c</strain>
    </source>
</reference>
<dbReference type="EMBL" id="X59720">
    <property type="status" value="NOT_ANNOTATED_CDS"/>
    <property type="molecule type" value="Genomic_DNA"/>
</dbReference>
<dbReference type="IntAct" id="P25561">
    <property type="interactions" value="8"/>
</dbReference>
<dbReference type="STRING" id="4932.YER138W-A"/>
<dbReference type="PaxDb" id="4932-YER138W-A"/>
<dbReference type="SGD" id="S000000526">
    <property type="gene designation" value="YCL021W"/>
</dbReference>
<sequence length="117" mass="13559">MMIIIFIELCRIADSLLWIPKSSRRTSSISTYLILLPYKKWNPNNYIKIHVLFIWIPKSSRRIYNIVCIHNIIASNDNGILTIIKLPPVPQKDPCIIFIITALLTSNHECSQINLLE</sequence>
<comment type="interaction">
    <interactant intactId="EBI-21696">
        <id>P25561</id>
    </interactant>
    <interactant intactId="EBI-16219">
        <id>P39940</id>
        <label>RSP5</label>
    </interactant>
    <organismsDiffer>false</organismsDiffer>
    <experiments>3</experiments>
</comment>
<comment type="caution">
    <text evidence="1">Product of a dubious gene prediction unlikely to encode a functional protein. Because of that it is not part of the S.cerevisiae S288c complete/reference proteome set.</text>
</comment>
<proteinExistence type="uncertain"/>
<gene>
    <name type="ordered locus">YCL021W</name>
    <name type="ORF">YCL21W</name>
</gene>
<organism>
    <name type="scientific">Saccharomyces cerevisiae (strain ATCC 204508 / S288c)</name>
    <name type="common">Baker's yeast</name>
    <dbReference type="NCBI Taxonomy" id="559292"/>
    <lineage>
        <taxon>Eukaryota</taxon>
        <taxon>Fungi</taxon>
        <taxon>Dikarya</taxon>
        <taxon>Ascomycota</taxon>
        <taxon>Saccharomycotina</taxon>
        <taxon>Saccharomycetes</taxon>
        <taxon>Saccharomycetales</taxon>
        <taxon>Saccharomycetaceae</taxon>
        <taxon>Saccharomyces</taxon>
    </lineage>
</organism>
<feature type="chain" id="PRO_0000202540" description="Putative uncharacterized protein YCL021W">
    <location>
        <begin position="1"/>
        <end position="117"/>
    </location>
</feature>
<name>YCC1_YEAST</name>
<evidence type="ECO:0000305" key="1">
    <source>
    </source>
</evidence>
<protein>
    <recommendedName>
        <fullName>Putative uncharacterized protein YCL021W</fullName>
    </recommendedName>
</protein>